<feature type="chain" id="PRO_0000291548" description="Protein CWC15 homolog A">
    <location>
        <begin position="1"/>
        <end position="228"/>
    </location>
</feature>
<feature type="region of interest" description="Disordered" evidence="3">
    <location>
        <begin position="1"/>
        <end position="126"/>
    </location>
</feature>
<feature type="coiled-coil region" evidence="2">
    <location>
        <begin position="121"/>
        <end position="165"/>
    </location>
</feature>
<feature type="compositionally biased region" description="Polar residues" evidence="3">
    <location>
        <begin position="24"/>
        <end position="34"/>
    </location>
</feature>
<feature type="compositionally biased region" description="Basic and acidic residues" evidence="3">
    <location>
        <begin position="52"/>
        <end position="84"/>
    </location>
</feature>
<feature type="compositionally biased region" description="Acidic residues" evidence="3">
    <location>
        <begin position="102"/>
        <end position="124"/>
    </location>
</feature>
<sequence>MTTAARPTFEPARGGRGKGEGDLSQLSKQYSSRDLPSHTKIKYRQATQDAPEEVRSRDFRRELEERERVVARDKNRDRPTREHTSSVSKKPRLDQIPAANLDADDPLTDEDGDEDSDEDSDDDTAALLAELEKIKKERAEEKDRKELEQKAEEERIRMENILSGNPLLNLTGPAAQSQASFKVKRRWDDDVVFKNCAKGVDEMKKQKRFVNDTLRSEFHKKFMEKYIK</sequence>
<reference key="1">
    <citation type="submission" date="2004-04" db="EMBL/GenBank/DDBJ databases">
        <authorList>
            <consortium name="NIH - Xenopus Gene Collection (XGC) project"/>
        </authorList>
    </citation>
    <scope>NUCLEOTIDE SEQUENCE [LARGE SCALE MRNA]</scope>
    <source>
        <tissue>Ovary</tissue>
    </source>
</reference>
<proteinExistence type="evidence at transcript level"/>
<evidence type="ECO:0000250" key="1">
    <source>
        <dbReference type="UniProtKB" id="Q9P013"/>
    </source>
</evidence>
<evidence type="ECO:0000255" key="2"/>
<evidence type="ECO:0000256" key="3">
    <source>
        <dbReference type="SAM" id="MobiDB-lite"/>
    </source>
</evidence>
<evidence type="ECO:0000305" key="4"/>
<organism>
    <name type="scientific">Xenopus laevis</name>
    <name type="common">African clawed frog</name>
    <dbReference type="NCBI Taxonomy" id="8355"/>
    <lineage>
        <taxon>Eukaryota</taxon>
        <taxon>Metazoa</taxon>
        <taxon>Chordata</taxon>
        <taxon>Craniata</taxon>
        <taxon>Vertebrata</taxon>
        <taxon>Euteleostomi</taxon>
        <taxon>Amphibia</taxon>
        <taxon>Batrachia</taxon>
        <taxon>Anura</taxon>
        <taxon>Pipoidea</taxon>
        <taxon>Pipidae</taxon>
        <taxon>Xenopodinae</taxon>
        <taxon>Xenopus</taxon>
        <taxon>Xenopus</taxon>
    </lineage>
</organism>
<comment type="function">
    <text evidence="1">Involved in pre-mRNA splicing as component of the spliceosome.</text>
</comment>
<comment type="subunit">
    <text evidence="1">Identified in the spliceosome C complex. Component of the minor spliceosome, which splices U12-type introns (By similarity).</text>
</comment>
<comment type="subcellular location">
    <subcellularLocation>
        <location evidence="1">Nucleus</location>
    </subcellularLocation>
</comment>
<comment type="similarity">
    <text evidence="4">Belongs to the CWC15 family.</text>
</comment>
<dbReference type="EMBL" id="BC068684">
    <property type="protein sequence ID" value="AAH68684.1"/>
    <property type="molecule type" value="mRNA"/>
</dbReference>
<dbReference type="RefSeq" id="NP_001084754.1">
    <property type="nucleotide sequence ID" value="NM_001091285.1"/>
</dbReference>
<dbReference type="SMR" id="Q6NUB2"/>
<dbReference type="DNASU" id="414727"/>
<dbReference type="GeneID" id="414727"/>
<dbReference type="KEGG" id="xla:414727"/>
<dbReference type="AGR" id="Xenbase:XB-GENE-987023"/>
<dbReference type="CTD" id="414727"/>
<dbReference type="Xenbase" id="XB-GENE-987023">
    <property type="gene designation" value="cwc15.S"/>
</dbReference>
<dbReference type="OMA" id="KYREHGQ"/>
<dbReference type="OrthoDB" id="30179at2759"/>
<dbReference type="Proteomes" id="UP000186698">
    <property type="component" value="Chromosome 2S"/>
</dbReference>
<dbReference type="Bgee" id="414727">
    <property type="expression patterns" value="Expressed in egg cell and 19 other cell types or tissues"/>
</dbReference>
<dbReference type="GO" id="GO:0071013">
    <property type="term" value="C:catalytic step 2 spliceosome"/>
    <property type="evidence" value="ECO:0000318"/>
    <property type="project" value="GO_Central"/>
</dbReference>
<dbReference type="GO" id="GO:0005634">
    <property type="term" value="C:nucleus"/>
    <property type="evidence" value="ECO:0000250"/>
    <property type="project" value="UniProtKB"/>
</dbReference>
<dbReference type="GO" id="GO:0071007">
    <property type="term" value="C:U2-type catalytic step 2 spliceosome"/>
    <property type="evidence" value="ECO:0000250"/>
    <property type="project" value="UniProtKB"/>
</dbReference>
<dbReference type="GO" id="GO:0003723">
    <property type="term" value="F:RNA binding"/>
    <property type="evidence" value="ECO:0000250"/>
    <property type="project" value="UniProtKB"/>
</dbReference>
<dbReference type="GO" id="GO:0045292">
    <property type="term" value="P:mRNA cis splicing, via spliceosome"/>
    <property type="evidence" value="ECO:0000318"/>
    <property type="project" value="GO_Central"/>
</dbReference>
<dbReference type="GO" id="GO:0000398">
    <property type="term" value="P:mRNA splicing, via spliceosome"/>
    <property type="evidence" value="ECO:0000250"/>
    <property type="project" value="UniProtKB"/>
</dbReference>
<dbReference type="InterPro" id="IPR006973">
    <property type="entry name" value="Cwf_Cwc_15"/>
</dbReference>
<dbReference type="PANTHER" id="PTHR12718">
    <property type="entry name" value="CELL CYCLE CONTROL PROTEIN CWF15"/>
    <property type="match status" value="1"/>
</dbReference>
<dbReference type="PANTHER" id="PTHR12718:SF2">
    <property type="entry name" value="SPLICEOSOME-ASSOCIATED PROTEIN CWC15 HOMOLOG"/>
    <property type="match status" value="1"/>
</dbReference>
<dbReference type="Pfam" id="PF04889">
    <property type="entry name" value="Cwf_Cwc_15"/>
    <property type="match status" value="1"/>
</dbReference>
<gene>
    <name type="primary">cwc15-a</name>
</gene>
<accession>Q6NUB2</accession>
<protein>
    <recommendedName>
        <fullName>Protein CWC15 homolog A</fullName>
    </recommendedName>
</protein>
<keyword id="KW-0175">Coiled coil</keyword>
<keyword id="KW-0507">mRNA processing</keyword>
<keyword id="KW-0508">mRNA splicing</keyword>
<keyword id="KW-0539">Nucleus</keyword>
<keyword id="KW-1185">Reference proteome</keyword>
<keyword id="KW-0747">Spliceosome</keyword>
<name>CW15A_XENLA</name>